<proteinExistence type="inferred from homology"/>
<accession>A1SYK3</accession>
<reference key="1">
    <citation type="journal article" date="2008" name="BMC Genomics">
        <title>Genomics of an extreme psychrophile, Psychromonas ingrahamii.</title>
        <authorList>
            <person name="Riley M."/>
            <person name="Staley J.T."/>
            <person name="Danchin A."/>
            <person name="Wang T.Z."/>
            <person name="Brettin T.S."/>
            <person name="Hauser L.J."/>
            <person name="Land M.L."/>
            <person name="Thompson L.S."/>
        </authorList>
    </citation>
    <scope>NUCLEOTIDE SEQUENCE [LARGE SCALE GENOMIC DNA]</scope>
    <source>
        <strain>DSM 17664 / CCUG 51855 / 37</strain>
    </source>
</reference>
<sequence>MKRTVILLLDSFGVGGAADADKFIGSLADGSQYDDMGSNTLGHIAEQCAKGNANEGRHGPLTIPNLNKLGFGRACAESSSTFPAGLDPLVEPIAAYGYAKEISTAKDTSSGHWEITGVPVLFDWGYFDKKQNSFPQELLDELVERADLPGYLGNCHASGTTILEDLGEEHLKTGKPIFYTSADSVFQIACHEETFGLERLYKLCELTRELVNKYNIGRVIARPFSGSASSNFMRTGNRHDYSVKPPSPTLLESMKESGGQVVSIGKISDIFAEQGITKATKANGLEALFDASLNELKQAGDQTIIFTNFVNFDADFGHRRNLPGYAAALEYFDKRLPEMLALMTEDDLLVLTADHGCDPTWKGTDHTREHIPAIFYGHAVKPGPIGLRETFADIGQSIADFHKLPALAYGKSIFS</sequence>
<keyword id="KW-0963">Cytoplasm</keyword>
<keyword id="KW-0413">Isomerase</keyword>
<keyword id="KW-0464">Manganese</keyword>
<keyword id="KW-0479">Metal-binding</keyword>
<keyword id="KW-1185">Reference proteome</keyword>
<gene>
    <name evidence="1" type="primary">deoB</name>
    <name type="ordered locus">Ping_2863</name>
</gene>
<protein>
    <recommendedName>
        <fullName evidence="1">Phosphopentomutase</fullName>
        <ecNumber evidence="1">5.4.2.7</ecNumber>
    </recommendedName>
    <alternativeName>
        <fullName evidence="1">Phosphodeoxyribomutase</fullName>
    </alternativeName>
</protein>
<dbReference type="EC" id="5.4.2.7" evidence="1"/>
<dbReference type="EMBL" id="CP000510">
    <property type="protein sequence ID" value="ABM04568.1"/>
    <property type="molecule type" value="Genomic_DNA"/>
</dbReference>
<dbReference type="RefSeq" id="WP_011771122.1">
    <property type="nucleotide sequence ID" value="NC_008709.1"/>
</dbReference>
<dbReference type="SMR" id="A1SYK3"/>
<dbReference type="STRING" id="357804.Ping_2863"/>
<dbReference type="KEGG" id="pin:Ping_2863"/>
<dbReference type="eggNOG" id="COG1015">
    <property type="taxonomic scope" value="Bacteria"/>
</dbReference>
<dbReference type="HOGENOM" id="CLU_053861_0_0_6"/>
<dbReference type="OrthoDB" id="9769930at2"/>
<dbReference type="UniPathway" id="UPA00002">
    <property type="reaction ID" value="UER00467"/>
</dbReference>
<dbReference type="Proteomes" id="UP000000639">
    <property type="component" value="Chromosome"/>
</dbReference>
<dbReference type="GO" id="GO:0005829">
    <property type="term" value="C:cytosol"/>
    <property type="evidence" value="ECO:0007669"/>
    <property type="project" value="TreeGrafter"/>
</dbReference>
<dbReference type="GO" id="GO:0000287">
    <property type="term" value="F:magnesium ion binding"/>
    <property type="evidence" value="ECO:0007669"/>
    <property type="project" value="InterPro"/>
</dbReference>
<dbReference type="GO" id="GO:0030145">
    <property type="term" value="F:manganese ion binding"/>
    <property type="evidence" value="ECO:0007669"/>
    <property type="project" value="UniProtKB-UniRule"/>
</dbReference>
<dbReference type="GO" id="GO:0008973">
    <property type="term" value="F:phosphopentomutase activity"/>
    <property type="evidence" value="ECO:0007669"/>
    <property type="project" value="UniProtKB-UniRule"/>
</dbReference>
<dbReference type="GO" id="GO:0006018">
    <property type="term" value="P:2-deoxyribose 1-phosphate catabolic process"/>
    <property type="evidence" value="ECO:0007669"/>
    <property type="project" value="UniProtKB-UniRule"/>
</dbReference>
<dbReference type="GO" id="GO:0006015">
    <property type="term" value="P:5-phosphoribose 1-diphosphate biosynthetic process"/>
    <property type="evidence" value="ECO:0007669"/>
    <property type="project" value="UniProtKB-UniPathway"/>
</dbReference>
<dbReference type="GO" id="GO:0043094">
    <property type="term" value="P:metabolic compound salvage"/>
    <property type="evidence" value="ECO:0007669"/>
    <property type="project" value="InterPro"/>
</dbReference>
<dbReference type="GO" id="GO:0009117">
    <property type="term" value="P:nucleotide metabolic process"/>
    <property type="evidence" value="ECO:0007669"/>
    <property type="project" value="InterPro"/>
</dbReference>
<dbReference type="CDD" id="cd16009">
    <property type="entry name" value="PPM"/>
    <property type="match status" value="1"/>
</dbReference>
<dbReference type="FunFam" id="3.30.70.1250:FF:000001">
    <property type="entry name" value="Phosphopentomutase"/>
    <property type="match status" value="1"/>
</dbReference>
<dbReference type="Gene3D" id="3.40.720.10">
    <property type="entry name" value="Alkaline Phosphatase, subunit A"/>
    <property type="match status" value="1"/>
</dbReference>
<dbReference type="Gene3D" id="3.30.70.1250">
    <property type="entry name" value="Phosphopentomutase"/>
    <property type="match status" value="1"/>
</dbReference>
<dbReference type="HAMAP" id="MF_00740">
    <property type="entry name" value="Phosphopentomut"/>
    <property type="match status" value="1"/>
</dbReference>
<dbReference type="InterPro" id="IPR017850">
    <property type="entry name" value="Alkaline_phosphatase_core_sf"/>
</dbReference>
<dbReference type="InterPro" id="IPR010045">
    <property type="entry name" value="DeoB"/>
</dbReference>
<dbReference type="InterPro" id="IPR006124">
    <property type="entry name" value="Metalloenzyme"/>
</dbReference>
<dbReference type="InterPro" id="IPR024052">
    <property type="entry name" value="Phosphopentomutase_DeoB_cap_sf"/>
</dbReference>
<dbReference type="NCBIfam" id="TIGR01696">
    <property type="entry name" value="deoB"/>
    <property type="match status" value="1"/>
</dbReference>
<dbReference type="NCBIfam" id="NF003766">
    <property type="entry name" value="PRK05362.1"/>
    <property type="match status" value="1"/>
</dbReference>
<dbReference type="PANTHER" id="PTHR21110">
    <property type="entry name" value="PHOSPHOPENTOMUTASE"/>
    <property type="match status" value="1"/>
</dbReference>
<dbReference type="PANTHER" id="PTHR21110:SF0">
    <property type="entry name" value="PHOSPHOPENTOMUTASE"/>
    <property type="match status" value="1"/>
</dbReference>
<dbReference type="Pfam" id="PF01676">
    <property type="entry name" value="Metalloenzyme"/>
    <property type="match status" value="1"/>
</dbReference>
<dbReference type="PIRSF" id="PIRSF001491">
    <property type="entry name" value="Ppentomutase"/>
    <property type="match status" value="1"/>
</dbReference>
<dbReference type="SUPFAM" id="SSF53649">
    <property type="entry name" value="Alkaline phosphatase-like"/>
    <property type="match status" value="1"/>
</dbReference>
<dbReference type="SUPFAM" id="SSF143856">
    <property type="entry name" value="DeoB insert domain-like"/>
    <property type="match status" value="1"/>
</dbReference>
<feature type="chain" id="PRO_1000046392" description="Phosphopentomutase">
    <location>
        <begin position="1"/>
        <end position="415"/>
    </location>
</feature>
<feature type="binding site" evidence="1">
    <location>
        <position position="10"/>
    </location>
    <ligand>
        <name>Mn(2+)</name>
        <dbReference type="ChEBI" id="CHEBI:29035"/>
        <label>1</label>
    </ligand>
</feature>
<feature type="binding site" evidence="1">
    <location>
        <position position="313"/>
    </location>
    <ligand>
        <name>Mn(2+)</name>
        <dbReference type="ChEBI" id="CHEBI:29035"/>
        <label>2</label>
    </ligand>
</feature>
<feature type="binding site" evidence="1">
    <location>
        <position position="318"/>
    </location>
    <ligand>
        <name>Mn(2+)</name>
        <dbReference type="ChEBI" id="CHEBI:29035"/>
        <label>2</label>
    </ligand>
</feature>
<feature type="binding site" evidence="1">
    <location>
        <position position="354"/>
    </location>
    <ligand>
        <name>Mn(2+)</name>
        <dbReference type="ChEBI" id="CHEBI:29035"/>
        <label>1</label>
    </ligand>
</feature>
<feature type="binding site" evidence="1">
    <location>
        <position position="355"/>
    </location>
    <ligand>
        <name>Mn(2+)</name>
        <dbReference type="ChEBI" id="CHEBI:29035"/>
        <label>1</label>
    </ligand>
</feature>
<feature type="binding site" evidence="1">
    <location>
        <position position="366"/>
    </location>
    <ligand>
        <name>Mn(2+)</name>
        <dbReference type="ChEBI" id="CHEBI:29035"/>
        <label>2</label>
    </ligand>
</feature>
<name>DEOB_PSYIN</name>
<organism>
    <name type="scientific">Psychromonas ingrahamii (strain DSM 17664 / CCUG 51855 / 37)</name>
    <dbReference type="NCBI Taxonomy" id="357804"/>
    <lineage>
        <taxon>Bacteria</taxon>
        <taxon>Pseudomonadati</taxon>
        <taxon>Pseudomonadota</taxon>
        <taxon>Gammaproteobacteria</taxon>
        <taxon>Alteromonadales</taxon>
        <taxon>Psychromonadaceae</taxon>
        <taxon>Psychromonas</taxon>
    </lineage>
</organism>
<comment type="function">
    <text evidence="1">Isomerase that catalyzes the conversion of deoxy-ribose 1-phosphate (dRib-1-P) and ribose 1-phosphate (Rib-1-P) to deoxy-ribose 5-phosphate (dRib-5-P) and ribose 5-phosphate (Rib-5-P), respectively.</text>
</comment>
<comment type="catalytic activity">
    <reaction evidence="1">
        <text>2-deoxy-alpha-D-ribose 1-phosphate = 2-deoxy-D-ribose 5-phosphate</text>
        <dbReference type="Rhea" id="RHEA:27658"/>
        <dbReference type="ChEBI" id="CHEBI:57259"/>
        <dbReference type="ChEBI" id="CHEBI:62877"/>
        <dbReference type="EC" id="5.4.2.7"/>
    </reaction>
</comment>
<comment type="catalytic activity">
    <reaction evidence="1">
        <text>alpha-D-ribose 1-phosphate = D-ribose 5-phosphate</text>
        <dbReference type="Rhea" id="RHEA:18793"/>
        <dbReference type="ChEBI" id="CHEBI:57720"/>
        <dbReference type="ChEBI" id="CHEBI:78346"/>
        <dbReference type="EC" id="5.4.2.7"/>
    </reaction>
</comment>
<comment type="cofactor">
    <cofactor evidence="1">
        <name>Mn(2+)</name>
        <dbReference type="ChEBI" id="CHEBI:29035"/>
    </cofactor>
    <text evidence="1">Binds 2 manganese ions.</text>
</comment>
<comment type="pathway">
    <text evidence="1">Carbohydrate degradation; 2-deoxy-D-ribose 1-phosphate degradation; D-glyceraldehyde 3-phosphate and acetaldehyde from 2-deoxy-alpha-D-ribose 1-phosphate: step 1/2.</text>
</comment>
<comment type="subcellular location">
    <subcellularLocation>
        <location evidence="1">Cytoplasm</location>
    </subcellularLocation>
</comment>
<comment type="similarity">
    <text evidence="1">Belongs to the phosphopentomutase family.</text>
</comment>
<evidence type="ECO:0000255" key="1">
    <source>
        <dbReference type="HAMAP-Rule" id="MF_00740"/>
    </source>
</evidence>